<organism>
    <name type="scientific">Ectopseudomonas mendocina (strain ymp)</name>
    <name type="common">Pseudomonas mendocina</name>
    <dbReference type="NCBI Taxonomy" id="399739"/>
    <lineage>
        <taxon>Bacteria</taxon>
        <taxon>Pseudomonadati</taxon>
        <taxon>Pseudomonadota</taxon>
        <taxon>Gammaproteobacteria</taxon>
        <taxon>Pseudomonadales</taxon>
        <taxon>Pseudomonadaceae</taxon>
        <taxon>Ectopseudomonas</taxon>
    </lineage>
</organism>
<protein>
    <recommendedName>
        <fullName evidence="1">Phosphatidylglycerol--prolipoprotein diacylglyceryl transferase</fullName>
        <ecNumber evidence="1">2.5.1.145</ecNumber>
    </recommendedName>
</protein>
<feature type="chain" id="PRO_1000065481" description="Phosphatidylglycerol--prolipoprotein diacylglyceryl transferase">
    <location>
        <begin position="1"/>
        <end position="266"/>
    </location>
</feature>
<feature type="transmembrane region" description="Helical" evidence="1">
    <location>
        <begin position="10"/>
        <end position="30"/>
    </location>
</feature>
<feature type="transmembrane region" description="Helical" evidence="1">
    <location>
        <begin position="56"/>
        <end position="76"/>
    </location>
</feature>
<feature type="transmembrane region" description="Helical" evidence="1">
    <location>
        <begin position="92"/>
        <end position="112"/>
    </location>
</feature>
<feature type="transmembrane region" description="Helical" evidence="1">
    <location>
        <begin position="120"/>
        <end position="140"/>
    </location>
</feature>
<feature type="transmembrane region" description="Helical" evidence="1">
    <location>
        <begin position="172"/>
        <end position="192"/>
    </location>
</feature>
<feature type="transmembrane region" description="Helical" evidence="1">
    <location>
        <begin position="200"/>
        <end position="220"/>
    </location>
</feature>
<feature type="transmembrane region" description="Helical" evidence="1">
    <location>
        <begin position="234"/>
        <end position="254"/>
    </location>
</feature>
<feature type="binding site" evidence="1">
    <location>
        <position position="139"/>
    </location>
    <ligand>
        <name>a 1,2-diacyl-sn-glycero-3-phospho-(1'-sn-glycerol)</name>
        <dbReference type="ChEBI" id="CHEBI:64716"/>
    </ligand>
</feature>
<proteinExistence type="inferred from homology"/>
<sequence>MLPYPQIDPVAIALGPLKIHWYGLMYLVGIGGAWWLASRRLARFDASWSKEKLSDLVFWVAMGVILGGRLGYVFFYDFAAYIAEPAKILRVWEGGMSFHGGLIGVMLATWWFGKRNGKSFFELMDFIAPLVPIGLGAGRIGNFINAELWGKATDVPWAMVFPTDPEQLARHPSQLYQFALEGVALFTILWFYSRKPRPTMAVSGMFAACYGVFRFIVEFVRVPDAQLGYLAWGWLTMGQILCLPMILGGIGLIAYAYKRQPVQGAA</sequence>
<reference key="1">
    <citation type="submission" date="2007-04" db="EMBL/GenBank/DDBJ databases">
        <title>Complete sequence of Pseudomonas mendocina ymp.</title>
        <authorList>
            <consortium name="US DOE Joint Genome Institute"/>
            <person name="Copeland A."/>
            <person name="Lucas S."/>
            <person name="Lapidus A."/>
            <person name="Barry K."/>
            <person name="Glavina del Rio T."/>
            <person name="Dalin E."/>
            <person name="Tice H."/>
            <person name="Pitluck S."/>
            <person name="Kiss H."/>
            <person name="Brettin T."/>
            <person name="Detter J.C."/>
            <person name="Bruce D."/>
            <person name="Han C."/>
            <person name="Schmutz J."/>
            <person name="Larimer F."/>
            <person name="Land M."/>
            <person name="Hauser L."/>
            <person name="Kyrpides N."/>
            <person name="Mikhailova N."/>
            <person name="Hersman L."/>
            <person name="Dubois J."/>
            <person name="Maurice P."/>
            <person name="Richardson P."/>
        </authorList>
    </citation>
    <scope>NUCLEOTIDE SEQUENCE [LARGE SCALE GENOMIC DNA]</scope>
    <source>
        <strain>ymp</strain>
    </source>
</reference>
<name>LGT_ECTM1</name>
<accession>A4Y045</accession>
<comment type="function">
    <text evidence="1">Catalyzes the transfer of the diacylglyceryl group from phosphatidylglycerol to the sulfhydryl group of the N-terminal cysteine of a prolipoprotein, the first step in the formation of mature lipoproteins.</text>
</comment>
<comment type="catalytic activity">
    <reaction evidence="1">
        <text>L-cysteinyl-[prolipoprotein] + a 1,2-diacyl-sn-glycero-3-phospho-(1'-sn-glycerol) = an S-1,2-diacyl-sn-glyceryl-L-cysteinyl-[prolipoprotein] + sn-glycerol 1-phosphate + H(+)</text>
        <dbReference type="Rhea" id="RHEA:56712"/>
        <dbReference type="Rhea" id="RHEA-COMP:14679"/>
        <dbReference type="Rhea" id="RHEA-COMP:14680"/>
        <dbReference type="ChEBI" id="CHEBI:15378"/>
        <dbReference type="ChEBI" id="CHEBI:29950"/>
        <dbReference type="ChEBI" id="CHEBI:57685"/>
        <dbReference type="ChEBI" id="CHEBI:64716"/>
        <dbReference type="ChEBI" id="CHEBI:140658"/>
        <dbReference type="EC" id="2.5.1.145"/>
    </reaction>
</comment>
<comment type="pathway">
    <text evidence="1">Protein modification; lipoprotein biosynthesis (diacylglyceryl transfer).</text>
</comment>
<comment type="subcellular location">
    <subcellularLocation>
        <location evidence="1">Cell inner membrane</location>
        <topology evidence="1">Multi-pass membrane protein</topology>
    </subcellularLocation>
</comment>
<comment type="similarity">
    <text evidence="1">Belongs to the Lgt family.</text>
</comment>
<dbReference type="EC" id="2.5.1.145" evidence="1"/>
<dbReference type="EMBL" id="CP000680">
    <property type="protein sequence ID" value="ABP86961.1"/>
    <property type="molecule type" value="Genomic_DNA"/>
</dbReference>
<dbReference type="SMR" id="A4Y045"/>
<dbReference type="STRING" id="399739.Pmen_4214"/>
<dbReference type="KEGG" id="pmy:Pmen_4214"/>
<dbReference type="PATRIC" id="fig|399739.8.peg.4266"/>
<dbReference type="eggNOG" id="COG0682">
    <property type="taxonomic scope" value="Bacteria"/>
</dbReference>
<dbReference type="HOGENOM" id="CLU_013386_1_0_6"/>
<dbReference type="OrthoDB" id="871140at2"/>
<dbReference type="UniPathway" id="UPA00664"/>
<dbReference type="GO" id="GO:0005886">
    <property type="term" value="C:plasma membrane"/>
    <property type="evidence" value="ECO:0007669"/>
    <property type="project" value="UniProtKB-SubCell"/>
</dbReference>
<dbReference type="GO" id="GO:0008961">
    <property type="term" value="F:phosphatidylglycerol-prolipoprotein diacylglyceryl transferase activity"/>
    <property type="evidence" value="ECO:0007669"/>
    <property type="project" value="UniProtKB-UniRule"/>
</dbReference>
<dbReference type="GO" id="GO:0042158">
    <property type="term" value="P:lipoprotein biosynthetic process"/>
    <property type="evidence" value="ECO:0007669"/>
    <property type="project" value="UniProtKB-UniRule"/>
</dbReference>
<dbReference type="HAMAP" id="MF_01147">
    <property type="entry name" value="Lgt"/>
    <property type="match status" value="1"/>
</dbReference>
<dbReference type="InterPro" id="IPR001640">
    <property type="entry name" value="Lgt"/>
</dbReference>
<dbReference type="NCBIfam" id="TIGR00544">
    <property type="entry name" value="lgt"/>
    <property type="match status" value="1"/>
</dbReference>
<dbReference type="PANTHER" id="PTHR30589:SF0">
    <property type="entry name" value="PHOSPHATIDYLGLYCEROL--PROLIPOPROTEIN DIACYLGLYCERYL TRANSFERASE"/>
    <property type="match status" value="1"/>
</dbReference>
<dbReference type="PANTHER" id="PTHR30589">
    <property type="entry name" value="PROLIPOPROTEIN DIACYLGLYCERYL TRANSFERASE"/>
    <property type="match status" value="1"/>
</dbReference>
<dbReference type="Pfam" id="PF01790">
    <property type="entry name" value="LGT"/>
    <property type="match status" value="1"/>
</dbReference>
<dbReference type="PROSITE" id="PS01311">
    <property type="entry name" value="LGT"/>
    <property type="match status" value="1"/>
</dbReference>
<evidence type="ECO:0000255" key="1">
    <source>
        <dbReference type="HAMAP-Rule" id="MF_01147"/>
    </source>
</evidence>
<gene>
    <name evidence="1" type="primary">lgt</name>
    <name type="ordered locus">Pmen_4214</name>
</gene>
<keyword id="KW-0997">Cell inner membrane</keyword>
<keyword id="KW-1003">Cell membrane</keyword>
<keyword id="KW-0472">Membrane</keyword>
<keyword id="KW-0808">Transferase</keyword>
<keyword id="KW-0812">Transmembrane</keyword>
<keyword id="KW-1133">Transmembrane helix</keyword>